<dbReference type="EC" id="2.4.1.346" evidence="1"/>
<dbReference type="EMBL" id="AL123456">
    <property type="protein sequence ID" value="CCP44965.1"/>
    <property type="molecule type" value="Genomic_DNA"/>
</dbReference>
<dbReference type="PIR" id="F70937">
    <property type="entry name" value="F70937"/>
</dbReference>
<dbReference type="RefSeq" id="NP_216704.2">
    <property type="nucleotide sequence ID" value="NC_000962.3"/>
</dbReference>
<dbReference type="RefSeq" id="WP_003411369.1">
    <property type="nucleotide sequence ID" value="NZ_NVQJ01000008.1"/>
</dbReference>
<dbReference type="SMR" id="P9WMZ3"/>
<dbReference type="FunCoup" id="P9WMZ3">
    <property type="interactions" value="208"/>
</dbReference>
<dbReference type="STRING" id="83332.Rv2188c"/>
<dbReference type="PaxDb" id="83332-Rv2188c"/>
<dbReference type="DNASU" id="887278"/>
<dbReference type="GeneID" id="887278"/>
<dbReference type="KEGG" id="mtu:Rv2188c"/>
<dbReference type="KEGG" id="mtv:RVBD_2188c"/>
<dbReference type="TubercuList" id="Rv2188c"/>
<dbReference type="eggNOG" id="COG0438">
    <property type="taxonomic scope" value="Bacteria"/>
</dbReference>
<dbReference type="InParanoid" id="P9WMZ3"/>
<dbReference type="OrthoDB" id="9808602at2"/>
<dbReference type="PhylomeDB" id="P9WMZ3"/>
<dbReference type="BRENDA" id="2.4.1.346">
    <property type="organism ID" value="3445"/>
</dbReference>
<dbReference type="BRENDA" id="2.4.1.B74">
    <property type="organism ID" value="3445"/>
</dbReference>
<dbReference type="UniPathway" id="UPA00949"/>
<dbReference type="Proteomes" id="UP000001584">
    <property type="component" value="Chromosome"/>
</dbReference>
<dbReference type="GO" id="GO:0005886">
    <property type="term" value="C:plasma membrane"/>
    <property type="evidence" value="ECO:0007005"/>
    <property type="project" value="MTBBASE"/>
</dbReference>
<dbReference type="GO" id="GO:0033164">
    <property type="term" value="F:glycolipid 1,6-alpha-mannosyltransferase activity"/>
    <property type="evidence" value="ECO:0000314"/>
    <property type="project" value="UniProtKB"/>
</dbReference>
<dbReference type="GO" id="GO:0016757">
    <property type="term" value="F:glycosyltransferase activity"/>
    <property type="evidence" value="ECO:0000318"/>
    <property type="project" value="GO_Central"/>
</dbReference>
<dbReference type="GO" id="GO:0000030">
    <property type="term" value="F:mannosyltransferase activity"/>
    <property type="evidence" value="ECO:0000314"/>
    <property type="project" value="MTBBASE"/>
</dbReference>
<dbReference type="GO" id="GO:0043750">
    <property type="term" value="F:phosphatidylinositol alpha-mannosyltransferase activity"/>
    <property type="evidence" value="ECO:0000314"/>
    <property type="project" value="UniProtKB"/>
</dbReference>
<dbReference type="GO" id="GO:0009247">
    <property type="term" value="P:glycolipid biosynthetic process"/>
    <property type="evidence" value="ECO:0000314"/>
    <property type="project" value="UniProtKB"/>
</dbReference>
<dbReference type="GO" id="GO:0046488">
    <property type="term" value="P:phosphatidylinositol metabolic process"/>
    <property type="evidence" value="ECO:0007669"/>
    <property type="project" value="UniProtKB-UniPathway"/>
</dbReference>
<dbReference type="GO" id="GO:0008654">
    <property type="term" value="P:phospholipid biosynthetic process"/>
    <property type="evidence" value="ECO:0007669"/>
    <property type="project" value="UniProtKB-KW"/>
</dbReference>
<dbReference type="CDD" id="cd03801">
    <property type="entry name" value="GT4_PimA-like"/>
    <property type="match status" value="1"/>
</dbReference>
<dbReference type="FunFam" id="3.40.50.2000:FF:000069">
    <property type="entry name" value="Alpha-(1-6)-phosphatidylinositol monomannoside mannosyltransferase"/>
    <property type="match status" value="1"/>
</dbReference>
<dbReference type="FunFam" id="3.40.50.2000:FF:000115">
    <property type="entry name" value="Alpha-(1-6)-phosphatidylinositol monomannoside mannosyltransferase"/>
    <property type="match status" value="1"/>
</dbReference>
<dbReference type="Gene3D" id="3.40.50.2000">
    <property type="entry name" value="Glycogen Phosphorylase B"/>
    <property type="match status" value="2"/>
</dbReference>
<dbReference type="InterPro" id="IPR001296">
    <property type="entry name" value="Glyco_trans_1"/>
</dbReference>
<dbReference type="InterPro" id="IPR028098">
    <property type="entry name" value="Glyco_trans_4-like_N"/>
</dbReference>
<dbReference type="InterPro" id="IPR050194">
    <property type="entry name" value="Glycosyltransferase_grp1"/>
</dbReference>
<dbReference type="PANTHER" id="PTHR45947">
    <property type="entry name" value="SULFOQUINOVOSYL TRANSFERASE SQD2"/>
    <property type="match status" value="1"/>
</dbReference>
<dbReference type="PANTHER" id="PTHR45947:SF3">
    <property type="entry name" value="SULFOQUINOVOSYL TRANSFERASE SQD2"/>
    <property type="match status" value="1"/>
</dbReference>
<dbReference type="Pfam" id="PF13439">
    <property type="entry name" value="Glyco_transf_4"/>
    <property type="match status" value="1"/>
</dbReference>
<dbReference type="Pfam" id="PF00534">
    <property type="entry name" value="Glycos_transf_1"/>
    <property type="match status" value="1"/>
</dbReference>
<dbReference type="SUPFAM" id="SSF53756">
    <property type="entry name" value="UDP-Glycosyltransferase/glycogen phosphorylase"/>
    <property type="match status" value="1"/>
</dbReference>
<sequence length="385" mass="41220">MSRVLLVTNDFPPRRGGIQSYLGEFVGRLVGSRAHAMTVYAPQWKGADAFDDAARAAGYRVVRHPSTVMLPGPTVDVRMRRLIAEHDIETVWFGAAAPLALLAPRARLAGASRVLASTHGHEVGWSMLPVARSVLRRIGDGTDVVTFVSSYTRSRFASAFGPAASLEYLPPGVDTDRFRPDPAARAELRKRYRLGERPTVVCLSRLVPRKGQDTLVTALPSIRRRVDGAALVIVGGGPYLETLRKLAHDCGVADHVTFTGGVATDELPAHHALADVFAMPCRTRGAGMDVEGLGIVFLEASAAGVPVIAGNSGGAPETVQHNKTGLVVDGRSVDRVADAVAELLIDRDRAVAMGAAGREWVTAQWRWDTLAAKLADFLRGDDAAR</sequence>
<evidence type="ECO:0000250" key="1">
    <source>
        <dbReference type="UniProtKB" id="A0R043"/>
    </source>
</evidence>
<evidence type="ECO:0000250" key="2">
    <source>
        <dbReference type="UniProtKB" id="Q8NNK8"/>
    </source>
</evidence>
<evidence type="ECO:0000269" key="3">
    <source>
    </source>
</evidence>
<evidence type="ECO:0000303" key="4">
    <source>
    </source>
</evidence>
<evidence type="ECO:0000305" key="5"/>
<evidence type="ECO:0000305" key="6">
    <source>
    </source>
</evidence>
<protein>
    <recommendedName>
        <fullName evidence="4">GDP-mannose-dependent alpha-(1-6)-phosphatidylinositol monomannoside mannosyltransferase</fullName>
        <ecNumber evidence="1">2.4.1.346</ecNumber>
    </recommendedName>
    <alternativeName>
        <fullName evidence="1">Alpha-D-mannose-alpha-(1-6)-phosphatidylmyo-inositol-mannosyltransferase</fullName>
    </alternativeName>
    <alternativeName>
        <fullName evidence="1">Alpha-mannosyltransferase</fullName>
        <shortName evidence="1">Alpha-ManT</shortName>
    </alternativeName>
    <alternativeName>
        <fullName evidence="5">Guanosine diphosphomannose-phosphatidyl-inositol alpha-mannosyltransferase</fullName>
    </alternativeName>
    <alternativeName>
        <fullName evidence="1">Phosphatidylinositol alpha-mannosyltransferase</fullName>
        <shortName evidence="1">PI alpha-mannosyltransferase</shortName>
    </alternativeName>
</protein>
<reference key="1">
    <citation type="journal article" date="1998" name="Nature">
        <title>Deciphering the biology of Mycobacterium tuberculosis from the complete genome sequence.</title>
        <authorList>
            <person name="Cole S.T."/>
            <person name="Brosch R."/>
            <person name="Parkhill J."/>
            <person name="Garnier T."/>
            <person name="Churcher C.M."/>
            <person name="Harris D.E."/>
            <person name="Gordon S.V."/>
            <person name="Eiglmeier K."/>
            <person name="Gas S."/>
            <person name="Barry C.E. III"/>
            <person name="Tekaia F."/>
            <person name="Badcock K."/>
            <person name="Basham D."/>
            <person name="Brown D."/>
            <person name="Chillingworth T."/>
            <person name="Connor R."/>
            <person name="Davies R.M."/>
            <person name="Devlin K."/>
            <person name="Feltwell T."/>
            <person name="Gentles S."/>
            <person name="Hamlin N."/>
            <person name="Holroyd S."/>
            <person name="Hornsby T."/>
            <person name="Jagels K."/>
            <person name="Krogh A."/>
            <person name="McLean J."/>
            <person name="Moule S."/>
            <person name="Murphy L.D."/>
            <person name="Oliver S."/>
            <person name="Osborne J."/>
            <person name="Quail M.A."/>
            <person name="Rajandream M.A."/>
            <person name="Rogers J."/>
            <person name="Rutter S."/>
            <person name="Seeger K."/>
            <person name="Skelton S."/>
            <person name="Squares S."/>
            <person name="Squares R."/>
            <person name="Sulston J.E."/>
            <person name="Taylor K."/>
            <person name="Whitehead S."/>
            <person name="Barrell B.G."/>
        </authorList>
    </citation>
    <scope>NUCLEOTIDE SEQUENCE [LARGE SCALE GENOMIC DNA]</scope>
    <source>
        <strain>ATCC 25618 / H37Rv</strain>
    </source>
</reference>
<reference key="2">
    <citation type="journal article" date="2009" name="J. Bacteriol.">
        <title>Characterization of the Corynebacterium glutamicum deltapimB' deltamgtA double deletion mutant and the role of Mycobacterium tuberculosis orthologues Rv2188c and Rv0557 in glycolipid biosynthesis.</title>
        <authorList>
            <person name="Mishra A.K."/>
            <person name="Batt S."/>
            <person name="Krumbach K."/>
            <person name="Eggeling L."/>
            <person name="Besra G.S."/>
        </authorList>
    </citation>
    <scope>FUNCTION IN AC1PIM2 BIOSYNTHESIS</scope>
    <scope>PATHWAY</scope>
    <scope>NOMENCLATURE</scope>
    <source>
        <strain>ATCC 25618 / H37Rv</strain>
    </source>
</reference>
<reference key="3">
    <citation type="journal article" date="2011" name="Mol. Cell. Proteomics">
        <title>Proteogenomic analysis of Mycobacterium tuberculosis by high resolution mass spectrometry.</title>
        <authorList>
            <person name="Kelkar D.S."/>
            <person name="Kumar D."/>
            <person name="Kumar P."/>
            <person name="Balakrishnan L."/>
            <person name="Muthusamy B."/>
            <person name="Yadav A.K."/>
            <person name="Shrivastava P."/>
            <person name="Marimuthu A."/>
            <person name="Anand S."/>
            <person name="Sundaram H."/>
            <person name="Kingsbury R."/>
            <person name="Harsha H.C."/>
            <person name="Nair B."/>
            <person name="Prasad T.S."/>
            <person name="Chauhan D.S."/>
            <person name="Katoch K."/>
            <person name="Katoch V.M."/>
            <person name="Kumar P."/>
            <person name="Chaerkady R."/>
            <person name="Ramachandran S."/>
            <person name="Dash D."/>
            <person name="Pandey A."/>
        </authorList>
    </citation>
    <scope>IDENTIFICATION BY MASS SPECTROMETRY [LARGE SCALE ANALYSIS]</scope>
    <source>
        <strain>ATCC 25618 / H37Rv</strain>
    </source>
</reference>
<name>PIMB_MYCTU</name>
<proteinExistence type="evidence at protein level"/>
<accession>P9WMZ3</accession>
<accession>L0T936</accession>
<accession>O53522</accession>
<accession>Q7D7D7</accession>
<keyword id="KW-0328">Glycosyltransferase</keyword>
<keyword id="KW-0444">Lipid biosynthesis</keyword>
<keyword id="KW-0443">Lipid metabolism</keyword>
<keyword id="KW-0594">Phospholipid biosynthesis</keyword>
<keyword id="KW-1208">Phospholipid metabolism</keyword>
<keyword id="KW-1185">Reference proteome</keyword>
<keyword id="KW-0808">Transferase</keyword>
<keyword id="KW-0843">Virulence</keyword>
<feature type="chain" id="PRO_0000393733" description="GDP-mannose-dependent alpha-(1-6)-phosphatidylinositol monomannoside mannosyltransferase">
    <location>
        <begin position="1"/>
        <end position="385"/>
    </location>
</feature>
<feature type="binding site" evidence="2">
    <location>
        <position position="205"/>
    </location>
    <ligand>
        <name>GDP-alpha-D-mannose</name>
        <dbReference type="ChEBI" id="CHEBI:57527"/>
    </ligand>
</feature>
<feature type="binding site" evidence="2">
    <location>
        <position position="210"/>
    </location>
    <ligand>
        <name>GDP-alpha-D-mannose</name>
        <dbReference type="ChEBI" id="CHEBI:57527"/>
    </ligand>
</feature>
<feature type="binding site" evidence="2">
    <location>
        <position position="262"/>
    </location>
    <ligand>
        <name>GDP-alpha-D-mannose</name>
        <dbReference type="ChEBI" id="CHEBI:57527"/>
    </ligand>
</feature>
<feature type="binding site" evidence="2">
    <location>
        <position position="299"/>
    </location>
    <ligand>
        <name>GDP-alpha-D-mannose</name>
        <dbReference type="ChEBI" id="CHEBI:57527"/>
    </ligand>
</feature>
<gene>
    <name evidence="4" type="primary">pimB</name>
    <name type="ordered locus">Rv2188c</name>
</gene>
<comment type="function">
    <text evidence="1 3">Involved in the biosynthesis of phosphatidyl-myo-inositol mannosides (PIM) which are early precursors in the biosynthesis of lipomannans (LM) and lipoarabinomannans (LAM) (PubMed:19395496). Catalyzes the addition of a mannosyl residue from GDP-D-mannose (GDP-Man) to the position 6 of a phosphatidyl-myo-inositol bearing an alpha-1,2-linked mannose residue (PIM1) to generate phosphatidyl-myo-inositol bearing alpha-1,2- and alpha-1,6-linked mannose residues (Ac1PIM2) (PubMed:19395496). PimB also catalyzes the addition of a mannosyl residue from GDP-Man to the position 6 of phosphatidyl-myo-inositol bearing an acylated alpha-1,2-linked mannose residue (Ac1PIM1) to generate monoacylated phosphatidyl-myo-inositol bearing alpha-1,2- and alpha-1,6-linked mannose residues (Ac1PIM2) (By similarity). The addition of the second mannosyl residue by PimB preferentially occurs before the acylation of the mannosyl residue transferred by PimA (By similarity). Also able to transfer a mannosyl residue from GDP-Man to the position 6 of a phosphatidyl-myo-inositol (PI), but this reaction is very slow (By similarity).</text>
</comment>
<comment type="catalytic activity">
    <reaction evidence="1">
        <text>a 1,2-diacyl-sn-glycero-3-phospho-[alpha-D-mannopyranosyl-(1&lt;-&gt;6)-D-myo-inositol] + GDP-alpha-D-mannose = a 2,6-O-bis(alpha-D-mannopyranosyl)-1-phosphatidyl-1D-myo-inositol + GDP + H(+)</text>
        <dbReference type="Rhea" id="RHEA:52440"/>
        <dbReference type="ChEBI" id="CHEBI:15378"/>
        <dbReference type="ChEBI" id="CHEBI:57527"/>
        <dbReference type="ChEBI" id="CHEBI:58189"/>
        <dbReference type="ChEBI" id="CHEBI:87673"/>
        <dbReference type="ChEBI" id="CHEBI:136624"/>
        <dbReference type="EC" id="2.4.1.346"/>
    </reaction>
</comment>
<comment type="catalytic activity">
    <reaction evidence="1">
        <text>a 1,2-diacyl-sn-glycero-3-phospho-[alpha-D-6-acyl-mannopyranosyl-(1&lt;-&gt;6)-D-myo-inositol] + GDP-alpha-D-mannose = a 2-O-(alpha-D-mannosyl)-6-O-(6-O-acyl-alpha-D-mannosyl)-1-phosphatidyl-1D-myo-inositol + GDP + H(+)</text>
        <dbReference type="Rhea" id="RHEA:52444"/>
        <dbReference type="ChEBI" id="CHEBI:15378"/>
        <dbReference type="ChEBI" id="CHEBI:57527"/>
        <dbReference type="ChEBI" id="CHEBI:58189"/>
        <dbReference type="ChEBI" id="CHEBI:88053"/>
        <dbReference type="ChEBI" id="CHEBI:136625"/>
        <dbReference type="EC" id="2.4.1.346"/>
    </reaction>
</comment>
<comment type="pathway">
    <text evidence="6">Phospholipid metabolism; phosphatidylinositol metabolism.</text>
</comment>
<comment type="similarity">
    <text evidence="5">Belongs to the glycosyltransferase group 1 family. Glycosyltransferase 4 subfamily.</text>
</comment>
<organism>
    <name type="scientific">Mycobacterium tuberculosis (strain ATCC 25618 / H37Rv)</name>
    <dbReference type="NCBI Taxonomy" id="83332"/>
    <lineage>
        <taxon>Bacteria</taxon>
        <taxon>Bacillati</taxon>
        <taxon>Actinomycetota</taxon>
        <taxon>Actinomycetes</taxon>
        <taxon>Mycobacteriales</taxon>
        <taxon>Mycobacteriaceae</taxon>
        <taxon>Mycobacterium</taxon>
        <taxon>Mycobacterium tuberculosis complex</taxon>
    </lineage>
</organism>